<reference key="1">
    <citation type="submission" date="2005-08" db="EMBL/GenBank/DDBJ databases">
        <title>Complete sequence of chromosome 1 of Nitrosospira multiformis ATCC 25196.</title>
        <authorList>
            <person name="Copeland A."/>
            <person name="Lucas S."/>
            <person name="Lapidus A."/>
            <person name="Barry K."/>
            <person name="Detter J.C."/>
            <person name="Glavina T."/>
            <person name="Hammon N."/>
            <person name="Israni S."/>
            <person name="Pitluck S."/>
            <person name="Chain P."/>
            <person name="Malfatti S."/>
            <person name="Shin M."/>
            <person name="Vergez L."/>
            <person name="Schmutz J."/>
            <person name="Larimer F."/>
            <person name="Land M."/>
            <person name="Hauser L."/>
            <person name="Kyrpides N."/>
            <person name="Lykidis A."/>
            <person name="Richardson P."/>
        </authorList>
    </citation>
    <scope>NUCLEOTIDE SEQUENCE [LARGE SCALE GENOMIC DNA]</scope>
    <source>
        <strain>ATCC 25196 / NCIMB 11849 / C 71</strain>
    </source>
</reference>
<accession>Q2YBS8</accession>
<comment type="function">
    <text evidence="1">Catalyzes the conversion of glucosamine-6-phosphate to glucosamine-1-phosphate.</text>
</comment>
<comment type="catalytic activity">
    <reaction evidence="1">
        <text>alpha-D-glucosamine 1-phosphate = D-glucosamine 6-phosphate</text>
        <dbReference type="Rhea" id="RHEA:23424"/>
        <dbReference type="ChEBI" id="CHEBI:58516"/>
        <dbReference type="ChEBI" id="CHEBI:58725"/>
        <dbReference type="EC" id="5.4.2.10"/>
    </reaction>
</comment>
<comment type="cofactor">
    <cofactor evidence="1">
        <name>Mg(2+)</name>
        <dbReference type="ChEBI" id="CHEBI:18420"/>
    </cofactor>
    <text evidence="1">Binds 1 Mg(2+) ion per subunit.</text>
</comment>
<comment type="PTM">
    <text evidence="1">Activated by phosphorylation.</text>
</comment>
<comment type="similarity">
    <text evidence="1">Belongs to the phosphohexose mutase family.</text>
</comment>
<dbReference type="EC" id="5.4.2.10" evidence="1"/>
<dbReference type="EMBL" id="CP000103">
    <property type="protein sequence ID" value="ABB73793.1"/>
    <property type="molecule type" value="Genomic_DNA"/>
</dbReference>
<dbReference type="RefSeq" id="WP_011379847.1">
    <property type="nucleotide sequence ID" value="NC_007614.1"/>
</dbReference>
<dbReference type="SMR" id="Q2YBS8"/>
<dbReference type="STRING" id="323848.Nmul_A0485"/>
<dbReference type="KEGG" id="nmu:Nmul_A0485"/>
<dbReference type="eggNOG" id="COG1109">
    <property type="taxonomic scope" value="Bacteria"/>
</dbReference>
<dbReference type="HOGENOM" id="CLU_016950_7_0_4"/>
<dbReference type="OrthoDB" id="9803322at2"/>
<dbReference type="Proteomes" id="UP000002718">
    <property type="component" value="Chromosome"/>
</dbReference>
<dbReference type="GO" id="GO:0005829">
    <property type="term" value="C:cytosol"/>
    <property type="evidence" value="ECO:0007669"/>
    <property type="project" value="TreeGrafter"/>
</dbReference>
<dbReference type="GO" id="GO:0000287">
    <property type="term" value="F:magnesium ion binding"/>
    <property type="evidence" value="ECO:0007669"/>
    <property type="project" value="UniProtKB-UniRule"/>
</dbReference>
<dbReference type="GO" id="GO:0008966">
    <property type="term" value="F:phosphoglucosamine mutase activity"/>
    <property type="evidence" value="ECO:0007669"/>
    <property type="project" value="UniProtKB-UniRule"/>
</dbReference>
<dbReference type="GO" id="GO:0004615">
    <property type="term" value="F:phosphomannomutase activity"/>
    <property type="evidence" value="ECO:0007669"/>
    <property type="project" value="TreeGrafter"/>
</dbReference>
<dbReference type="GO" id="GO:0005975">
    <property type="term" value="P:carbohydrate metabolic process"/>
    <property type="evidence" value="ECO:0007669"/>
    <property type="project" value="InterPro"/>
</dbReference>
<dbReference type="GO" id="GO:0009252">
    <property type="term" value="P:peptidoglycan biosynthetic process"/>
    <property type="evidence" value="ECO:0007669"/>
    <property type="project" value="TreeGrafter"/>
</dbReference>
<dbReference type="GO" id="GO:0006048">
    <property type="term" value="P:UDP-N-acetylglucosamine biosynthetic process"/>
    <property type="evidence" value="ECO:0007669"/>
    <property type="project" value="TreeGrafter"/>
</dbReference>
<dbReference type="CDD" id="cd05802">
    <property type="entry name" value="GlmM"/>
    <property type="match status" value="1"/>
</dbReference>
<dbReference type="FunFam" id="3.30.310.50:FF:000001">
    <property type="entry name" value="Phosphoglucosamine mutase"/>
    <property type="match status" value="1"/>
</dbReference>
<dbReference type="FunFam" id="3.40.120.10:FF:000001">
    <property type="entry name" value="Phosphoglucosamine mutase"/>
    <property type="match status" value="1"/>
</dbReference>
<dbReference type="FunFam" id="3.40.120.10:FF:000003">
    <property type="entry name" value="Phosphoglucosamine mutase"/>
    <property type="match status" value="1"/>
</dbReference>
<dbReference type="Gene3D" id="3.40.120.10">
    <property type="entry name" value="Alpha-D-Glucose-1,6-Bisphosphate, subunit A, domain 3"/>
    <property type="match status" value="3"/>
</dbReference>
<dbReference type="Gene3D" id="3.30.310.50">
    <property type="entry name" value="Alpha-D-phosphohexomutase, C-terminal domain"/>
    <property type="match status" value="1"/>
</dbReference>
<dbReference type="HAMAP" id="MF_01554_B">
    <property type="entry name" value="GlmM_B"/>
    <property type="match status" value="1"/>
</dbReference>
<dbReference type="InterPro" id="IPR005844">
    <property type="entry name" value="A-D-PHexomutase_a/b/a-I"/>
</dbReference>
<dbReference type="InterPro" id="IPR016055">
    <property type="entry name" value="A-D-PHexomutase_a/b/a-I/II/III"/>
</dbReference>
<dbReference type="InterPro" id="IPR005845">
    <property type="entry name" value="A-D-PHexomutase_a/b/a-II"/>
</dbReference>
<dbReference type="InterPro" id="IPR005846">
    <property type="entry name" value="A-D-PHexomutase_a/b/a-III"/>
</dbReference>
<dbReference type="InterPro" id="IPR005843">
    <property type="entry name" value="A-D-PHexomutase_C"/>
</dbReference>
<dbReference type="InterPro" id="IPR036900">
    <property type="entry name" value="A-D-PHexomutase_C_sf"/>
</dbReference>
<dbReference type="InterPro" id="IPR016066">
    <property type="entry name" value="A-D-PHexomutase_CS"/>
</dbReference>
<dbReference type="InterPro" id="IPR005841">
    <property type="entry name" value="Alpha-D-phosphohexomutase_SF"/>
</dbReference>
<dbReference type="InterPro" id="IPR006352">
    <property type="entry name" value="GlmM_bact"/>
</dbReference>
<dbReference type="InterPro" id="IPR050060">
    <property type="entry name" value="Phosphoglucosamine_mutase"/>
</dbReference>
<dbReference type="NCBIfam" id="TIGR01455">
    <property type="entry name" value="glmM"/>
    <property type="match status" value="1"/>
</dbReference>
<dbReference type="NCBIfam" id="NF008139">
    <property type="entry name" value="PRK10887.1"/>
    <property type="match status" value="1"/>
</dbReference>
<dbReference type="PANTHER" id="PTHR42946:SF1">
    <property type="entry name" value="PHOSPHOGLUCOMUTASE (ALPHA-D-GLUCOSE-1,6-BISPHOSPHATE-DEPENDENT)"/>
    <property type="match status" value="1"/>
</dbReference>
<dbReference type="PANTHER" id="PTHR42946">
    <property type="entry name" value="PHOSPHOHEXOSE MUTASE"/>
    <property type="match status" value="1"/>
</dbReference>
<dbReference type="Pfam" id="PF02878">
    <property type="entry name" value="PGM_PMM_I"/>
    <property type="match status" value="1"/>
</dbReference>
<dbReference type="Pfam" id="PF02879">
    <property type="entry name" value="PGM_PMM_II"/>
    <property type="match status" value="1"/>
</dbReference>
<dbReference type="Pfam" id="PF02880">
    <property type="entry name" value="PGM_PMM_III"/>
    <property type="match status" value="1"/>
</dbReference>
<dbReference type="Pfam" id="PF00408">
    <property type="entry name" value="PGM_PMM_IV"/>
    <property type="match status" value="1"/>
</dbReference>
<dbReference type="PRINTS" id="PR00509">
    <property type="entry name" value="PGMPMM"/>
</dbReference>
<dbReference type="SUPFAM" id="SSF55957">
    <property type="entry name" value="Phosphoglucomutase, C-terminal domain"/>
    <property type="match status" value="1"/>
</dbReference>
<dbReference type="SUPFAM" id="SSF53738">
    <property type="entry name" value="Phosphoglucomutase, first 3 domains"/>
    <property type="match status" value="3"/>
</dbReference>
<dbReference type="PROSITE" id="PS00710">
    <property type="entry name" value="PGM_PMM"/>
    <property type="match status" value="1"/>
</dbReference>
<sequence>MTRKYFGTDGIRGRVGEAPITPEFVIHLGYSAGKVLTSSDWHLSKGERPAVLIGKDTRISGYMLESALQAGLSAAGVDVLLSGPMPTPAVAYLTRALRLQAGIVISASHNPFEDNGIKFFSALGAKLPDATEQEIEAGLNAPLKAMPSAQLGKARRVNDARGRYIEFCKSTFPNHLDLRGLRVVVDCAHGATYQIAGPVLHELGAEVVAIGIHPDGLNINHECGATHGAALQEAVRHHRADIGVALDGDGDRVIMTDGEGMLYDGDQLIYLVAKHRKQNGLLKGGVAGTLMTNLAIENGLKKLDIPFARANVGDRYVLELLQIKNWQLGGEGSGHIICLDKHTTGDGIISALQVLYAMRDSGKTLTELASDVTLYPQQLINVRVPKGFDAHNSLAIKTAQAEAERDLDTTGRVLLRASGTEPLIRVMVEGESGQKVKHWAEKIAEVVRNAAAGERSVEKALPN</sequence>
<keyword id="KW-0413">Isomerase</keyword>
<keyword id="KW-0460">Magnesium</keyword>
<keyword id="KW-0479">Metal-binding</keyword>
<keyword id="KW-0597">Phosphoprotein</keyword>
<keyword id="KW-1185">Reference proteome</keyword>
<name>GLMM_NITMU</name>
<feature type="chain" id="PRO_0000301349" description="Phosphoglucosamine mutase">
    <location>
        <begin position="1"/>
        <end position="463"/>
    </location>
</feature>
<feature type="active site" description="Phosphoserine intermediate" evidence="1">
    <location>
        <position position="108"/>
    </location>
</feature>
<feature type="binding site" description="via phosphate group" evidence="1">
    <location>
        <position position="108"/>
    </location>
    <ligand>
        <name>Mg(2+)</name>
        <dbReference type="ChEBI" id="CHEBI:18420"/>
    </ligand>
</feature>
<feature type="binding site" evidence="1">
    <location>
        <position position="247"/>
    </location>
    <ligand>
        <name>Mg(2+)</name>
        <dbReference type="ChEBI" id="CHEBI:18420"/>
    </ligand>
</feature>
<feature type="binding site" evidence="1">
    <location>
        <position position="249"/>
    </location>
    <ligand>
        <name>Mg(2+)</name>
        <dbReference type="ChEBI" id="CHEBI:18420"/>
    </ligand>
</feature>
<feature type="binding site" evidence="1">
    <location>
        <position position="251"/>
    </location>
    <ligand>
        <name>Mg(2+)</name>
        <dbReference type="ChEBI" id="CHEBI:18420"/>
    </ligand>
</feature>
<feature type="modified residue" description="Phosphoserine" evidence="1">
    <location>
        <position position="108"/>
    </location>
</feature>
<protein>
    <recommendedName>
        <fullName evidence="1">Phosphoglucosamine mutase</fullName>
        <ecNumber evidence="1">5.4.2.10</ecNumber>
    </recommendedName>
</protein>
<proteinExistence type="inferred from homology"/>
<organism>
    <name type="scientific">Nitrosospira multiformis (strain ATCC 25196 / NCIMB 11849 / C 71)</name>
    <dbReference type="NCBI Taxonomy" id="323848"/>
    <lineage>
        <taxon>Bacteria</taxon>
        <taxon>Pseudomonadati</taxon>
        <taxon>Pseudomonadota</taxon>
        <taxon>Betaproteobacteria</taxon>
        <taxon>Nitrosomonadales</taxon>
        <taxon>Nitrosomonadaceae</taxon>
        <taxon>Nitrosospira</taxon>
    </lineage>
</organism>
<gene>
    <name evidence="1" type="primary">glmM</name>
    <name type="ordered locus">Nmul_A0485</name>
</gene>
<evidence type="ECO:0000255" key="1">
    <source>
        <dbReference type="HAMAP-Rule" id="MF_01554"/>
    </source>
</evidence>